<accession>A5IY65</accession>
<organism>
    <name type="scientific">Mycoplasmopsis agalactiae (strain NCTC 10123 / CIP 59.7 / PG2)</name>
    <name type="common">Mycoplasma agalactiae</name>
    <dbReference type="NCBI Taxonomy" id="347257"/>
    <lineage>
        <taxon>Bacteria</taxon>
        <taxon>Bacillati</taxon>
        <taxon>Mycoplasmatota</taxon>
        <taxon>Mycoplasmoidales</taxon>
        <taxon>Metamycoplasmataceae</taxon>
        <taxon>Mycoplasmopsis</taxon>
    </lineage>
</organism>
<reference key="1">
    <citation type="journal article" date="2007" name="PLoS Genet.">
        <title>Being pathogenic, plastic, and sexual while living with a nearly minimal bacterial genome.</title>
        <authorList>
            <person name="Sirand-Pugnet P."/>
            <person name="Lartigue C."/>
            <person name="Marenda M."/>
            <person name="Jacob D."/>
            <person name="Barre A."/>
            <person name="Barbe V."/>
            <person name="Schenowitz C."/>
            <person name="Mangenot S."/>
            <person name="Couloux A."/>
            <person name="Segurens B."/>
            <person name="de Daruvar A."/>
            <person name="Blanchard A."/>
            <person name="Citti C."/>
        </authorList>
    </citation>
    <scope>NUCLEOTIDE SEQUENCE [LARGE SCALE GENOMIC DNA]</scope>
    <source>
        <strain>NCTC 10123 / CIP 59.7 / PG2</strain>
    </source>
</reference>
<feature type="chain" id="PRO_1000120778" description="Small ribosomal subunit protein bS6">
    <location>
        <begin position="1"/>
        <end position="145"/>
    </location>
</feature>
<keyword id="KW-1185">Reference proteome</keyword>
<keyword id="KW-0687">Ribonucleoprotein</keyword>
<keyword id="KW-0689">Ribosomal protein</keyword>
<keyword id="KW-0694">RNA-binding</keyword>
<keyword id="KW-0699">rRNA-binding</keyword>
<sequence length="145" mass="16638">MNKYEIMLIIDPAIDMAMANEIVESVFDKKNINKVVKLENSTLAYPINKSSKAQYVVYTLEAKSELIAEFTRRANIAKFIWRQMVINLDTEKGFQRSKKAFKHRIAKDAKVANKGTGVKQLIENLEKTMSHKAKPSFKKEVKKSN</sequence>
<comment type="function">
    <text evidence="1">Binds together with bS18 to 16S ribosomal RNA.</text>
</comment>
<comment type="similarity">
    <text evidence="1">Belongs to the bacterial ribosomal protein bS6 family.</text>
</comment>
<gene>
    <name evidence="1" type="primary">rpsF</name>
    <name type="ordered locus">MAG2760</name>
</gene>
<name>RS6_MYCAP</name>
<protein>
    <recommendedName>
        <fullName evidence="1">Small ribosomal subunit protein bS6</fullName>
    </recommendedName>
    <alternativeName>
        <fullName evidence="2">30S ribosomal protein S6</fullName>
    </alternativeName>
</protein>
<proteinExistence type="inferred from homology"/>
<dbReference type="EMBL" id="CU179680">
    <property type="protein sequence ID" value="CAL58974.1"/>
    <property type="molecule type" value="Genomic_DNA"/>
</dbReference>
<dbReference type="RefSeq" id="WP_011949452.1">
    <property type="nucleotide sequence ID" value="NC_009497.1"/>
</dbReference>
<dbReference type="SMR" id="A5IY65"/>
<dbReference type="STRING" id="347257.MAG2760"/>
<dbReference type="GeneID" id="93358039"/>
<dbReference type="KEGG" id="maa:MAG2760"/>
<dbReference type="HOGENOM" id="CLU_137913_0_0_14"/>
<dbReference type="Proteomes" id="UP000007065">
    <property type="component" value="Chromosome"/>
</dbReference>
<dbReference type="GO" id="GO:1990904">
    <property type="term" value="C:ribonucleoprotein complex"/>
    <property type="evidence" value="ECO:0007669"/>
    <property type="project" value="UniProtKB-KW"/>
</dbReference>
<dbReference type="GO" id="GO:0005840">
    <property type="term" value="C:ribosome"/>
    <property type="evidence" value="ECO:0007669"/>
    <property type="project" value="UniProtKB-KW"/>
</dbReference>
<dbReference type="GO" id="GO:0019843">
    <property type="term" value="F:rRNA binding"/>
    <property type="evidence" value="ECO:0007669"/>
    <property type="project" value="UniProtKB-UniRule"/>
</dbReference>
<dbReference type="GO" id="GO:0003735">
    <property type="term" value="F:structural constituent of ribosome"/>
    <property type="evidence" value="ECO:0007669"/>
    <property type="project" value="InterPro"/>
</dbReference>
<dbReference type="GO" id="GO:0006412">
    <property type="term" value="P:translation"/>
    <property type="evidence" value="ECO:0007669"/>
    <property type="project" value="UniProtKB-UniRule"/>
</dbReference>
<dbReference type="CDD" id="cd00473">
    <property type="entry name" value="bS6"/>
    <property type="match status" value="1"/>
</dbReference>
<dbReference type="Gene3D" id="3.30.70.60">
    <property type="match status" value="1"/>
</dbReference>
<dbReference type="HAMAP" id="MF_00360">
    <property type="entry name" value="Ribosomal_bS6"/>
    <property type="match status" value="1"/>
</dbReference>
<dbReference type="InterPro" id="IPR000529">
    <property type="entry name" value="Ribosomal_bS6"/>
</dbReference>
<dbReference type="InterPro" id="IPR035980">
    <property type="entry name" value="Ribosomal_bS6_sf"/>
</dbReference>
<dbReference type="InterPro" id="IPR020814">
    <property type="entry name" value="Ribosomal_S6_plastid/chlpt"/>
</dbReference>
<dbReference type="InterPro" id="IPR014717">
    <property type="entry name" value="Transl_elong_EF1B/ribsomal_bS6"/>
</dbReference>
<dbReference type="NCBIfam" id="TIGR00166">
    <property type="entry name" value="S6"/>
    <property type="match status" value="1"/>
</dbReference>
<dbReference type="Pfam" id="PF01250">
    <property type="entry name" value="Ribosomal_S6"/>
    <property type="match status" value="1"/>
</dbReference>
<dbReference type="SUPFAM" id="SSF54995">
    <property type="entry name" value="Ribosomal protein S6"/>
    <property type="match status" value="1"/>
</dbReference>
<evidence type="ECO:0000255" key="1">
    <source>
        <dbReference type="HAMAP-Rule" id="MF_00360"/>
    </source>
</evidence>
<evidence type="ECO:0000305" key="2"/>